<protein>
    <recommendedName>
        <fullName evidence="1">Large ribosomal subunit protein uL24</fullName>
    </recommendedName>
    <alternativeName>
        <fullName evidence="2">50S ribosomal protein L24</fullName>
    </alternativeName>
</protein>
<proteinExistence type="inferred from homology"/>
<dbReference type="EMBL" id="CP000847">
    <property type="protein sequence ID" value="ABV75264.1"/>
    <property type="molecule type" value="Genomic_DNA"/>
</dbReference>
<dbReference type="RefSeq" id="WP_012149894.1">
    <property type="nucleotide sequence ID" value="NC_009881.1"/>
</dbReference>
<dbReference type="SMR" id="A8GPD9"/>
<dbReference type="STRING" id="293614.A1C_05050"/>
<dbReference type="KEGG" id="rak:A1C_05050"/>
<dbReference type="eggNOG" id="COG0198">
    <property type="taxonomic scope" value="Bacteria"/>
</dbReference>
<dbReference type="HOGENOM" id="CLU_093315_2_0_5"/>
<dbReference type="Proteomes" id="UP000006830">
    <property type="component" value="Chromosome"/>
</dbReference>
<dbReference type="GO" id="GO:1990904">
    <property type="term" value="C:ribonucleoprotein complex"/>
    <property type="evidence" value="ECO:0007669"/>
    <property type="project" value="UniProtKB-KW"/>
</dbReference>
<dbReference type="GO" id="GO:0005840">
    <property type="term" value="C:ribosome"/>
    <property type="evidence" value="ECO:0007669"/>
    <property type="project" value="UniProtKB-KW"/>
</dbReference>
<dbReference type="GO" id="GO:0019843">
    <property type="term" value="F:rRNA binding"/>
    <property type="evidence" value="ECO:0007669"/>
    <property type="project" value="UniProtKB-UniRule"/>
</dbReference>
<dbReference type="GO" id="GO:0003735">
    <property type="term" value="F:structural constituent of ribosome"/>
    <property type="evidence" value="ECO:0007669"/>
    <property type="project" value="InterPro"/>
</dbReference>
<dbReference type="GO" id="GO:0006412">
    <property type="term" value="P:translation"/>
    <property type="evidence" value="ECO:0007669"/>
    <property type="project" value="UniProtKB-UniRule"/>
</dbReference>
<dbReference type="CDD" id="cd06089">
    <property type="entry name" value="KOW_RPL26"/>
    <property type="match status" value="1"/>
</dbReference>
<dbReference type="FunFam" id="2.30.30.30:FF:000004">
    <property type="entry name" value="50S ribosomal protein L24"/>
    <property type="match status" value="1"/>
</dbReference>
<dbReference type="Gene3D" id="2.30.30.30">
    <property type="match status" value="1"/>
</dbReference>
<dbReference type="HAMAP" id="MF_01326_B">
    <property type="entry name" value="Ribosomal_uL24_B"/>
    <property type="match status" value="1"/>
</dbReference>
<dbReference type="InterPro" id="IPR005824">
    <property type="entry name" value="KOW"/>
</dbReference>
<dbReference type="InterPro" id="IPR014722">
    <property type="entry name" value="Rib_uL2_dom2"/>
</dbReference>
<dbReference type="InterPro" id="IPR003256">
    <property type="entry name" value="Ribosomal_uL24"/>
</dbReference>
<dbReference type="InterPro" id="IPR005825">
    <property type="entry name" value="Ribosomal_uL24_CS"/>
</dbReference>
<dbReference type="InterPro" id="IPR041988">
    <property type="entry name" value="Ribosomal_uL24_KOW"/>
</dbReference>
<dbReference type="InterPro" id="IPR008991">
    <property type="entry name" value="Translation_prot_SH3-like_sf"/>
</dbReference>
<dbReference type="NCBIfam" id="TIGR01079">
    <property type="entry name" value="rplX_bact"/>
    <property type="match status" value="1"/>
</dbReference>
<dbReference type="PANTHER" id="PTHR12903">
    <property type="entry name" value="MITOCHONDRIAL RIBOSOMAL PROTEIN L24"/>
    <property type="match status" value="1"/>
</dbReference>
<dbReference type="Pfam" id="PF00467">
    <property type="entry name" value="KOW"/>
    <property type="match status" value="1"/>
</dbReference>
<dbReference type="Pfam" id="PF17136">
    <property type="entry name" value="ribosomal_L24"/>
    <property type="match status" value="1"/>
</dbReference>
<dbReference type="SMART" id="SM00739">
    <property type="entry name" value="KOW"/>
    <property type="match status" value="1"/>
</dbReference>
<dbReference type="SUPFAM" id="SSF50104">
    <property type="entry name" value="Translation proteins SH3-like domain"/>
    <property type="match status" value="1"/>
</dbReference>
<dbReference type="PROSITE" id="PS01108">
    <property type="entry name" value="RIBOSOMAL_L24"/>
    <property type="match status" value="1"/>
</dbReference>
<sequence length="109" mass="11701">MVKLKVRKGDEVIVITGKHKGKKGKILKVFPEDSKVIVAGVNLVKKHTKPNQMSGGGIITKELPIHISNIAHIDPKTGDPTKVAFKCLDDGSKVRVAKKSGEIIGKVGK</sequence>
<feature type="chain" id="PRO_1000052295" description="Large ribosomal subunit protein uL24">
    <location>
        <begin position="1"/>
        <end position="109"/>
    </location>
</feature>
<organism>
    <name type="scientific">Rickettsia akari (strain Hartford)</name>
    <dbReference type="NCBI Taxonomy" id="293614"/>
    <lineage>
        <taxon>Bacteria</taxon>
        <taxon>Pseudomonadati</taxon>
        <taxon>Pseudomonadota</taxon>
        <taxon>Alphaproteobacteria</taxon>
        <taxon>Rickettsiales</taxon>
        <taxon>Rickettsiaceae</taxon>
        <taxon>Rickettsieae</taxon>
        <taxon>Rickettsia</taxon>
        <taxon>spotted fever group</taxon>
    </lineage>
</organism>
<evidence type="ECO:0000255" key="1">
    <source>
        <dbReference type="HAMAP-Rule" id="MF_01326"/>
    </source>
</evidence>
<evidence type="ECO:0000305" key="2"/>
<comment type="function">
    <text evidence="1">One of two assembly initiator proteins, it binds directly to the 5'-end of the 23S rRNA, where it nucleates assembly of the 50S subunit.</text>
</comment>
<comment type="function">
    <text evidence="1">One of the proteins that surrounds the polypeptide exit tunnel on the outside of the subunit.</text>
</comment>
<comment type="subunit">
    <text evidence="1">Part of the 50S ribosomal subunit.</text>
</comment>
<comment type="similarity">
    <text evidence="1">Belongs to the universal ribosomal protein uL24 family.</text>
</comment>
<name>RL24_RICAH</name>
<reference key="1">
    <citation type="submission" date="2007-09" db="EMBL/GenBank/DDBJ databases">
        <title>Complete genome sequence of Rickettsia akari.</title>
        <authorList>
            <person name="Madan A."/>
            <person name="Fahey J."/>
            <person name="Helton E."/>
            <person name="Ketteman M."/>
            <person name="Madan A."/>
            <person name="Rodrigues S."/>
            <person name="Sanchez A."/>
            <person name="Whiting M."/>
            <person name="Dasch G."/>
            <person name="Eremeeva M."/>
        </authorList>
    </citation>
    <scope>NUCLEOTIDE SEQUENCE [LARGE SCALE GENOMIC DNA]</scope>
    <source>
        <strain>Hartford</strain>
    </source>
</reference>
<keyword id="KW-0687">Ribonucleoprotein</keyword>
<keyword id="KW-0689">Ribosomal protein</keyword>
<keyword id="KW-0694">RNA-binding</keyword>
<keyword id="KW-0699">rRNA-binding</keyword>
<gene>
    <name evidence="1" type="primary">rplX</name>
    <name type="ordered locus">A1C_05050</name>
</gene>
<accession>A8GPD9</accession>